<accession>P04622</accession>
<proteinExistence type="inferred from homology"/>
<organism>
    <name type="scientific">Human immunodeficiency virus type 1 group M subtype A (isolate MAL)</name>
    <name type="common">HIV-1</name>
    <dbReference type="NCBI Taxonomy" id="11697"/>
    <lineage>
        <taxon>Viruses</taxon>
        <taxon>Riboviria</taxon>
        <taxon>Pararnavirae</taxon>
        <taxon>Artverviricota</taxon>
        <taxon>Revtraviricetes</taxon>
        <taxon>Ortervirales</taxon>
        <taxon>Retroviridae</taxon>
        <taxon>Orthoretrovirinae</taxon>
        <taxon>Lentivirus</taxon>
        <taxon>Human immunodeficiency virus type 1</taxon>
    </lineage>
</organism>
<reference key="1">
    <citation type="journal article" date="1986" name="Cell">
        <title>Genetic variability of the AIDS virus: nucleotide sequence analysis of two isolates from African patients.</title>
        <authorList>
            <person name="Alizon M."/>
            <person name="Wain-Hobson S."/>
            <person name="Montagnier L."/>
            <person name="Sonigo P."/>
        </authorList>
    </citation>
    <scope>NUCLEOTIDE SEQUENCE [GENOMIC RNA]</scope>
</reference>
<reference key="2">
    <citation type="journal article" date="1999" name="Arch. Biochem. Biophys.">
        <title>The ins and outs of HIV Rev.</title>
        <authorList>
            <person name="Hope T.J."/>
        </authorList>
    </citation>
    <scope>REVIEW</scope>
</reference>
<sequence length="117" mass="13023">MAGRSGDSDEDLLRAIRLIKILYQSNPPPNTEGTTRQARRNRRRRWRARQRQINSIGERILSTYLGRPEEPVPLQLPPLERLTLNCNEDCGTSGTQGVGSPQISVESPAILGSGTEE</sequence>
<keyword id="KW-0014">AIDS</keyword>
<keyword id="KW-1035">Host cytoplasm</keyword>
<keyword id="KW-1048">Host nucleus</keyword>
<keyword id="KW-0945">Host-virus interaction</keyword>
<keyword id="KW-0488">Methylation</keyword>
<keyword id="KW-0509">mRNA transport</keyword>
<keyword id="KW-0597">Phosphoprotein</keyword>
<keyword id="KW-1185">Reference proteome</keyword>
<keyword id="KW-0694">RNA-binding</keyword>
<keyword id="KW-0813">Transport</keyword>
<gene>
    <name evidence="1" type="primary">rev</name>
</gene>
<comment type="function">
    <text evidence="1">Escorts unspliced or incompletely spliced viral pre-mRNAs (late transcripts) out of the nucleus of infected cells. These pre-mRNAs carry a recognition sequence called Rev responsive element (RRE) located in the env gene, that is not present in fully spliced viral mRNAs (early transcripts). This function is essential since most viral proteins are translated from unspliced or partially spliced pre-mRNAs which cannot exit the nucleus by the pathway used by fully processed cellular mRNAs. Rev itself is translated from a fully spliced mRNA that readily exits the nucleus. Rev's nuclear localization signal (NLS) binds directly to KPNB1/Importin beta-1 without previous binding to KPNA1/Importin alpha-1. KPNB1 binds to the GDP bound form of RAN (Ran-GDP) and targets Rev to the nucleus. In the nucleus, the conversion from Ran-GDP to Ran-GTP dissociates Rev from KPNB1 and allows Rev's binding to the RRE in viral pre-mRNAs. Rev multimerization on the RRE via cooperative assembly exposes its nuclear export signal (NES) to the surface. Rev can then form a complex with XPO1/CRM1 and Ran-GTP, leading to nuclear export of the complex. Conversion from Ran-GTP to Ran-GDP mediates dissociation of the Rev/RRE/XPO1/RAN complex, so that Rev can return to the nucleus for a subsequent round of export. Beside KPNB1, also seems to interact with TNPO1/Transportin-1, RANBP5/IPO5 and IPO7/RANBP7 for nuclear import. The nucleoporin-like HRB/RIP is an essential cofactor that probably indirectly interacts with Rev to release HIV RNAs from the perinuclear region to the cytoplasm.</text>
</comment>
<comment type="subunit">
    <text evidence="1">Homomultimer; when bound to the RRE. Multimeric assembly is essential for activity and may involve XPO1. Binds to human KPNB1, XPO1, TNPO1, RANBP5 and IPO7. Interacts with the viral Integrase. Interacts with human KHDRBS1. Interacts with human NAP1; this interaction decreases Rev multimerization and stimulates its activity. Interacts with human DEAD-box helicases DDX3 and DDX24; these interactions may serve for viral RNA export to the cytoplasm and packaging, respectively. Interacts with human PSIP1; this interaction may inhibit HIV-1 DNA integration by promoting dissociation of the Integrase-LEDGF/p75 complex.</text>
</comment>
<comment type="subcellular location">
    <subcellularLocation>
        <location evidence="1">Host nucleus</location>
        <location evidence="1">Host nucleolus</location>
    </subcellularLocation>
    <subcellularLocation>
        <location evidence="1">Host cytoplasm</location>
    </subcellularLocation>
    <text evidence="1">The presence of both nuclear import and nuclear export signals leads to continuous shuttling between the nucleus and cytoplasm.</text>
</comment>
<comment type="domain">
    <text evidence="1">The RNA-binding motif binds to the RRE, a 240 bp stem-and-loop structure present in incompletely spliced viral pre-mRNAs. This region also contains the NLS which mediates nuclear localization via KPNB1 binding and, when the N-terminal sequence is present, nucleolar targeting. These overlapping functions prevent Rev bound to RRE from undesirable return to the nucleus. When Rev binds the RRE, the NLS becomes masked while the NES remains accessible. The leucine-rich NES mediates binding to human XPO1.</text>
</comment>
<comment type="PTM">
    <text evidence="1">Asymmetrically arginine dimethylated at one site by host PRMT6. Methylation impairs the RNA-binding activity and export of viral RNA from the nucleus to the cytoplasm.</text>
</comment>
<comment type="PTM">
    <text evidence="1">Phosphorylated by protein kinase CK2. Presence of, and maybe binding to the N-terminus of the regulatory beta subunit of CK2 is necessary for CK2-mediated Rev's phosphorylation.</text>
</comment>
<comment type="miscellaneous">
    <text evidence="1">HIV-1 lineages are divided in three main groups, M (for Major), O (for Outlier), and N (for New, or Non-M, Non-O). The vast majority of strains found worldwide belong to the group M. Group O seems to be endemic to and largely confined to Cameroon and neighboring countries in West Central Africa, where these viruses represent a small minority of HIV-1 strains. The group N is represented by a limited number of isolates from Cameroonian persons. The group M is further subdivided in 9 clades or subtypes (A to D, F to H, J and K).</text>
</comment>
<comment type="similarity">
    <text evidence="1">Belongs to the HIV-1 REV protein family.</text>
</comment>
<dbReference type="EMBL" id="X04415">
    <property type="status" value="NOT_ANNOTATED_CDS"/>
    <property type="molecule type" value="Genomic_RNA"/>
</dbReference>
<dbReference type="PIR" id="T01666">
    <property type="entry name" value="T01666"/>
</dbReference>
<dbReference type="SMR" id="P04622"/>
<dbReference type="Proteomes" id="UP000007696">
    <property type="component" value="Genome"/>
</dbReference>
<dbReference type="GO" id="GO:0030430">
    <property type="term" value="C:host cell cytoplasm"/>
    <property type="evidence" value="ECO:0007669"/>
    <property type="project" value="UniProtKB-SubCell"/>
</dbReference>
<dbReference type="GO" id="GO:0044196">
    <property type="term" value="C:host cell nucleolus"/>
    <property type="evidence" value="ECO:0007669"/>
    <property type="project" value="UniProtKB-SubCell"/>
</dbReference>
<dbReference type="GO" id="GO:0003700">
    <property type="term" value="F:DNA-binding transcription factor activity"/>
    <property type="evidence" value="ECO:0007669"/>
    <property type="project" value="UniProtKB-UniRule"/>
</dbReference>
<dbReference type="GO" id="GO:0003723">
    <property type="term" value="F:RNA binding"/>
    <property type="evidence" value="ECO:0007669"/>
    <property type="project" value="UniProtKB-UniRule"/>
</dbReference>
<dbReference type="GO" id="GO:0051028">
    <property type="term" value="P:mRNA transport"/>
    <property type="evidence" value="ECO:0007669"/>
    <property type="project" value="UniProtKB-UniRule"/>
</dbReference>
<dbReference type="GO" id="GO:0016032">
    <property type="term" value="P:viral process"/>
    <property type="evidence" value="ECO:0007669"/>
    <property type="project" value="UniProtKB-UniRule"/>
</dbReference>
<dbReference type="Gene3D" id="6.10.140.630">
    <property type="match status" value="1"/>
</dbReference>
<dbReference type="HAMAP" id="MF_04077">
    <property type="entry name" value="REV_HIV1"/>
    <property type="match status" value="1"/>
</dbReference>
<dbReference type="InterPro" id="IPR000625">
    <property type="entry name" value="REV_protein"/>
</dbReference>
<dbReference type="Pfam" id="PF00424">
    <property type="entry name" value="REV"/>
    <property type="match status" value="1"/>
</dbReference>
<name>REV_HV1MA</name>
<feature type="chain" id="PRO_0000085272" description="Protein Rev">
    <location>
        <begin position="1"/>
        <end position="117"/>
    </location>
</feature>
<feature type="region of interest" description="Homomultimerization" evidence="1">
    <location>
        <begin position="18"/>
        <end position="26"/>
    </location>
</feature>
<feature type="region of interest" description="Disordered" evidence="2">
    <location>
        <begin position="24"/>
        <end position="49"/>
    </location>
</feature>
<feature type="region of interest" description="Disordered" evidence="2">
    <location>
        <begin position="93"/>
        <end position="117"/>
    </location>
</feature>
<feature type="short sequence motif" description="Nuclear localization signal and RNA-binding (RRE)" evidence="1">
    <location>
        <begin position="35"/>
        <end position="51"/>
    </location>
</feature>
<feature type="short sequence motif" description="Nuclear export signal and binding to XPO1" evidence="1">
    <location>
        <begin position="74"/>
        <end position="85"/>
    </location>
</feature>
<feature type="compositionally biased region" description="Basic residues" evidence="2">
    <location>
        <begin position="37"/>
        <end position="49"/>
    </location>
</feature>
<feature type="compositionally biased region" description="Polar residues" evidence="2">
    <location>
        <begin position="93"/>
        <end position="105"/>
    </location>
</feature>
<feature type="modified residue" description="Phosphoserine; by host CK2" evidence="1">
    <location>
        <position position="5"/>
    </location>
</feature>
<feature type="modified residue" description="Phosphoserine; by host CK2" evidence="1">
    <location>
        <position position="8"/>
    </location>
</feature>
<feature type="modified residue" description="Phosphoserine; by host" evidence="1">
    <location>
        <position position="93"/>
    </location>
</feature>
<feature type="modified residue" description="Phosphoserine; by host" evidence="1">
    <location>
        <position position="100"/>
    </location>
</feature>
<protein>
    <recommendedName>
        <fullName evidence="1">Protein Rev</fullName>
    </recommendedName>
    <alternativeName>
        <fullName evidence="1">ART/TRS</fullName>
    </alternativeName>
    <alternativeName>
        <fullName evidence="1">Anti-repression transactivator</fullName>
    </alternativeName>
    <alternativeName>
        <fullName evidence="1">Regulator of expression of viral proteins</fullName>
    </alternativeName>
</protein>
<evidence type="ECO:0000255" key="1">
    <source>
        <dbReference type="HAMAP-Rule" id="MF_04077"/>
    </source>
</evidence>
<evidence type="ECO:0000256" key="2">
    <source>
        <dbReference type="SAM" id="MobiDB-lite"/>
    </source>
</evidence>
<organismHost>
    <name type="scientific">Homo sapiens</name>
    <name type="common">Human</name>
    <dbReference type="NCBI Taxonomy" id="9606"/>
</organismHost>